<sequence length="234" mass="27091">MQTPPESTDVKLDTLNEPSAHLIEKNVALPKDIFRSYLSYWIYEIARYTPVMILSLVIGVLVLLIIFFNDNEACVFNSAIFAFTSLVGLLIILSDGNPKLVSRRNFRTELLVDVITRKPAVEGKEWRIITYNMNQYLFNHGQWHTPYYFYSDEDCYRYFLRLVEGVTPKKQTATSIGNSPVTAKPEDAIESASPSSRLNYQNFLLKAAEIERQAQENYWRRRHPNIDALLKKTE</sequence>
<accession>P39552</accession>
<accession>D6VPN3</accession>
<name>MST28_YEAST</name>
<organism>
    <name type="scientific">Saccharomyces cerevisiae (strain ATCC 204508 / S288c)</name>
    <name type="common">Baker's yeast</name>
    <dbReference type="NCBI Taxonomy" id="559292"/>
    <lineage>
        <taxon>Eukaryota</taxon>
        <taxon>Fungi</taxon>
        <taxon>Dikarya</taxon>
        <taxon>Ascomycota</taxon>
        <taxon>Saccharomycotina</taxon>
        <taxon>Saccharomycetes</taxon>
        <taxon>Saccharomycetales</taxon>
        <taxon>Saccharomycetaceae</taxon>
        <taxon>Saccharomyces</taxon>
    </lineage>
</organism>
<protein>
    <recommendedName>
        <fullName>Multicopy suppressor of SEC21 protein 28</fullName>
    </recommendedName>
    <alternativeName>
        <fullName>DUP240 protein MST28</fullName>
    </alternativeName>
</protein>
<proteinExistence type="evidence at protein level"/>
<dbReference type="EMBL" id="L28920">
    <property type="protein sequence ID" value="AAC09494.1"/>
    <property type="molecule type" value="Genomic_DNA"/>
</dbReference>
<dbReference type="EMBL" id="BK006935">
    <property type="protein sequence ID" value="DAA07003.1"/>
    <property type="molecule type" value="Genomic_DNA"/>
</dbReference>
<dbReference type="PIR" id="S53484">
    <property type="entry name" value="S53484"/>
</dbReference>
<dbReference type="RefSeq" id="NP_009419.1">
    <property type="nucleotide sequence ID" value="NM_001178225.1"/>
</dbReference>
<dbReference type="BioGRID" id="31810">
    <property type="interactions" value="58"/>
</dbReference>
<dbReference type="ComplexPortal" id="CPX-1303">
    <property type="entry name" value="MST27-MST28 vesicle formation complex"/>
</dbReference>
<dbReference type="DIP" id="DIP-1853N"/>
<dbReference type="FunCoup" id="P39552">
    <property type="interactions" value="42"/>
</dbReference>
<dbReference type="IntAct" id="P39552">
    <property type="interactions" value="6"/>
</dbReference>
<dbReference type="MINT" id="P39552"/>
<dbReference type="STRING" id="4932.YAR033W"/>
<dbReference type="iPTMnet" id="P39552"/>
<dbReference type="PaxDb" id="4932-YAR033W"/>
<dbReference type="PeptideAtlas" id="P39552"/>
<dbReference type="EnsemblFungi" id="YAR033W_mRNA">
    <property type="protein sequence ID" value="YAR033W"/>
    <property type="gene ID" value="YAR033W"/>
</dbReference>
<dbReference type="GeneID" id="851284"/>
<dbReference type="KEGG" id="sce:YAR033W"/>
<dbReference type="AGR" id="SGD:S000000079"/>
<dbReference type="SGD" id="S000000079">
    <property type="gene designation" value="MST28"/>
</dbReference>
<dbReference type="VEuPathDB" id="FungiDB:YAR033W"/>
<dbReference type="eggNOG" id="ENOG502SSNW">
    <property type="taxonomic scope" value="Eukaryota"/>
</dbReference>
<dbReference type="GeneTree" id="ENSGT00940000176285"/>
<dbReference type="HOGENOM" id="CLU_081384_0_1_1"/>
<dbReference type="InParanoid" id="P39552"/>
<dbReference type="OrthoDB" id="4061733at2759"/>
<dbReference type="BioCyc" id="YEAST:G3O-28882-MONOMER"/>
<dbReference type="PRO" id="PR:P39552"/>
<dbReference type="Proteomes" id="UP000002311">
    <property type="component" value="Chromosome I"/>
</dbReference>
<dbReference type="RNAct" id="P39552">
    <property type="molecule type" value="protein"/>
</dbReference>
<dbReference type="GO" id="GO:0030663">
    <property type="term" value="C:COPI-coated vesicle membrane"/>
    <property type="evidence" value="ECO:0000314"/>
    <property type="project" value="ComplexPortal"/>
</dbReference>
<dbReference type="GO" id="GO:0005783">
    <property type="term" value="C:endoplasmic reticulum"/>
    <property type="evidence" value="ECO:0000314"/>
    <property type="project" value="ComplexPortal"/>
</dbReference>
<dbReference type="GO" id="GO:0012507">
    <property type="term" value="C:ER to Golgi transport vesicle membrane"/>
    <property type="evidence" value="ECO:0007669"/>
    <property type="project" value="UniProtKB-SubCell"/>
</dbReference>
<dbReference type="GO" id="GO:0005794">
    <property type="term" value="C:Golgi apparatus"/>
    <property type="evidence" value="ECO:0000314"/>
    <property type="project" value="ComplexPortal"/>
</dbReference>
<dbReference type="GO" id="GO:0016020">
    <property type="term" value="C:membrane"/>
    <property type="evidence" value="ECO:0000314"/>
    <property type="project" value="SGD"/>
</dbReference>
<dbReference type="GO" id="GO:0005886">
    <property type="term" value="C:plasma membrane"/>
    <property type="evidence" value="ECO:0000315"/>
    <property type="project" value="SGD"/>
</dbReference>
<dbReference type="GO" id="GO:0015031">
    <property type="term" value="P:protein transport"/>
    <property type="evidence" value="ECO:0007669"/>
    <property type="project" value="UniProtKB-KW"/>
</dbReference>
<dbReference type="GO" id="GO:0016050">
    <property type="term" value="P:vesicle organization"/>
    <property type="evidence" value="ECO:0000314"/>
    <property type="project" value="ComplexPortal"/>
</dbReference>
<dbReference type="GO" id="GO:0016192">
    <property type="term" value="P:vesicle-mediated transport"/>
    <property type="evidence" value="ECO:0007669"/>
    <property type="project" value="UniProtKB-KW"/>
</dbReference>
<dbReference type="InterPro" id="IPR001142">
    <property type="entry name" value="DUP/COS"/>
</dbReference>
<dbReference type="Pfam" id="PF00674">
    <property type="entry name" value="DUP"/>
    <property type="match status" value="1"/>
</dbReference>
<keyword id="KW-0968">Cytoplasmic vesicle</keyword>
<keyword id="KW-0256">Endoplasmic reticulum</keyword>
<keyword id="KW-0931">ER-Golgi transport</keyword>
<keyword id="KW-0333">Golgi apparatus</keyword>
<keyword id="KW-0472">Membrane</keyword>
<keyword id="KW-0597">Phosphoprotein</keyword>
<keyword id="KW-0653">Protein transport</keyword>
<keyword id="KW-1185">Reference proteome</keyword>
<keyword id="KW-0812">Transmembrane</keyword>
<keyword id="KW-1133">Transmembrane helix</keyword>
<keyword id="KW-0813">Transport</keyword>
<comment type="function">
    <text evidence="3">Involved in protein trafficking vesicle formation, probably by stabilizing of coatomer at the Golgi membrane and thus allowing the efficient formation of COPI coated vesicles.</text>
</comment>
<comment type="subunit">
    <text evidence="3">Interacts with MST27. Binds to coatomer proteins of COPI and SEC23/SEC24 of COPII coated vesicles.</text>
</comment>
<comment type="interaction">
    <interactant intactId="EBI-20785">
        <id>P39552</id>
    </interactant>
    <interactant intactId="EBI-6205">
        <id>P53176</id>
        <label>MST27</label>
    </interactant>
    <organismsDiffer>false</organismsDiffer>
    <experiments>4</experiments>
</comment>
<comment type="subcellular location">
    <subcellularLocation>
        <location evidence="2 3">Endoplasmic reticulum</location>
    </subcellularLocation>
    <subcellularLocation>
        <location evidence="3">Golgi apparatus</location>
    </subcellularLocation>
    <subcellularLocation>
        <location evidence="3">Cytoplasmic vesicle</location>
        <location evidence="3">COPI-coated vesicle membrane</location>
        <topology evidence="3">Multi-pass membrane protein</topology>
    </subcellularLocation>
    <subcellularLocation>
        <location evidence="3">Cytoplasmic vesicle</location>
        <location evidence="3">COPII-coated vesicle membrane</location>
        <topology evidence="3">Multi-pass membrane protein</topology>
    </subcellularLocation>
</comment>
<comment type="miscellaneous">
    <text>Members of the DUP240 multigene family are specific to S.cerevisiae sensu strictu. Cells lacking all 10 DUP240 proteins show no obvious alterations in mating, sporulation and cell growth.</text>
</comment>
<comment type="similarity">
    <text evidence="4">Belongs to the DUP/COS family.</text>
</comment>
<gene>
    <name type="primary">MST28</name>
    <name type="ordered locus">YAR033W</name>
    <name type="ORF">FUN59</name>
</gene>
<reference key="1">
    <citation type="submission" date="1994-02" db="EMBL/GenBank/DDBJ databases">
        <title>Sequencing of chromosome I of Saccharomyces cerevisiae: analysis of the 52 Kbp CDC15-FLO1-PHO11-YAR074 region.</title>
        <authorList>
            <person name="Bussey H."/>
            <person name="Keng T."/>
            <person name="Storms R.K."/>
            <person name="Vo D."/>
            <person name="Zhong W."/>
            <person name="Fortin N."/>
            <person name="Barton A.B."/>
            <person name="Kaback D.B."/>
            <person name="Clark M.W."/>
        </authorList>
    </citation>
    <scope>NUCLEOTIDE SEQUENCE [GENOMIC DNA]</scope>
    <source>
        <strain>ATCC 204511 / S288c / AB972</strain>
    </source>
</reference>
<reference key="2">
    <citation type="journal article" date="1995" name="Proc. Natl. Acad. Sci. U.S.A.">
        <title>The nucleotide sequence of chromosome I from Saccharomyces cerevisiae.</title>
        <authorList>
            <person name="Bussey H."/>
            <person name="Kaback D.B."/>
            <person name="Zhong W.-W."/>
            <person name="Vo D.H."/>
            <person name="Clark M.W."/>
            <person name="Fortin N."/>
            <person name="Hall J."/>
            <person name="Ouellette B.F.F."/>
            <person name="Keng T."/>
            <person name="Barton A.B."/>
            <person name="Su Y."/>
            <person name="Davies C.J."/>
            <person name="Storms R.K."/>
        </authorList>
    </citation>
    <scope>NUCLEOTIDE SEQUENCE [LARGE SCALE GENOMIC DNA]</scope>
    <source>
        <strain>ATCC 204508 / S288c</strain>
    </source>
</reference>
<reference key="3">
    <citation type="journal article" date="2014" name="G3 (Bethesda)">
        <title>The reference genome sequence of Saccharomyces cerevisiae: Then and now.</title>
        <authorList>
            <person name="Engel S.R."/>
            <person name="Dietrich F.S."/>
            <person name="Fisk D.G."/>
            <person name="Binkley G."/>
            <person name="Balakrishnan R."/>
            <person name="Costanzo M.C."/>
            <person name="Dwight S.S."/>
            <person name="Hitz B.C."/>
            <person name="Karra K."/>
            <person name="Nash R.S."/>
            <person name="Weng S."/>
            <person name="Wong E.D."/>
            <person name="Lloyd P."/>
            <person name="Skrzypek M.S."/>
            <person name="Miyasato S.R."/>
            <person name="Simison M."/>
            <person name="Cherry J.M."/>
        </authorList>
    </citation>
    <scope>GENOME REANNOTATION</scope>
    <source>
        <strain>ATCC 204508 / S288c</strain>
    </source>
</reference>
<reference evidence="4" key="4">
    <citation type="journal article" date="2002" name="Microbiology">
        <title>Functional analysis of the Saccharomyces cerevisiae DUP240 multigene family reveals membrane-associated proteins that are not essential for cell viability.</title>
        <authorList>
            <person name="Poirey R."/>
            <person name="Despons L."/>
            <person name="Leh V."/>
            <person name="Lafuente M.-J."/>
            <person name="Potier S."/>
            <person name="Souciet J.-L."/>
            <person name="Jauniaux J.-C."/>
        </authorList>
    </citation>
    <scope>SUBCELLULAR LOCATION</scope>
</reference>
<reference key="5">
    <citation type="journal article" date="2003" name="Mol. Biol. Cell">
        <title>Suppression of coatomer mutants by a new protein family with COPI and COPII binding motifs in Saccharomyces cerevisiae.</title>
        <authorList>
            <person name="Sandmann T."/>
            <person name="Herrmann J.M."/>
            <person name="Dengjel J."/>
            <person name="Schwarz H."/>
            <person name="Spang A."/>
        </authorList>
    </citation>
    <scope>FUNCTION</scope>
    <scope>SUBCELLULAR LOCATION</scope>
    <scope>INTERACTION WITH MST27</scope>
</reference>
<reference key="6">
    <citation type="journal article" date="2008" name="Mol. Cell. Proteomics">
        <title>A multidimensional chromatography technology for in-depth phosphoproteome analysis.</title>
        <authorList>
            <person name="Albuquerque C.P."/>
            <person name="Smolka M.B."/>
            <person name="Payne S.H."/>
            <person name="Bafna V."/>
            <person name="Eng J."/>
            <person name="Zhou H."/>
        </authorList>
    </citation>
    <scope>PHOSPHORYLATION [LARGE SCALE ANALYSIS] AT THR-3</scope>
    <scope>IDENTIFICATION BY MASS SPECTROMETRY [LARGE SCALE ANALYSIS]</scope>
</reference>
<feature type="chain" id="PRO_0000207526" description="Multicopy suppressor of SEC21 protein 28">
    <location>
        <begin position="1"/>
        <end position="234"/>
    </location>
</feature>
<feature type="topological domain" description="Cytoplasmic" evidence="1">
    <location>
        <begin position="1"/>
        <end position="47"/>
    </location>
</feature>
<feature type="transmembrane region" description="Helical" evidence="1">
    <location>
        <begin position="48"/>
        <end position="68"/>
    </location>
</feature>
<feature type="topological domain" description="Extracellular" evidence="1">
    <location>
        <begin position="69"/>
        <end position="72"/>
    </location>
</feature>
<feature type="transmembrane region" description="Helical" evidence="1">
    <location>
        <begin position="73"/>
        <end position="93"/>
    </location>
</feature>
<feature type="topological domain" description="Cytoplasmic" evidence="1">
    <location>
        <begin position="94"/>
        <end position="234"/>
    </location>
</feature>
<feature type="region of interest" description="COPI binding">
    <location>
        <begin position="231"/>
        <end position="234"/>
    </location>
</feature>
<feature type="modified residue" description="Phosphothreonine" evidence="5">
    <location>
        <position position="3"/>
    </location>
</feature>
<evidence type="ECO:0000255" key="1"/>
<evidence type="ECO:0000269" key="2">
    <source>
    </source>
</evidence>
<evidence type="ECO:0000269" key="3">
    <source>
    </source>
</evidence>
<evidence type="ECO:0000305" key="4"/>
<evidence type="ECO:0007744" key="5">
    <source>
    </source>
</evidence>